<comment type="similarity">
    <text evidence="1">Belongs to the universal ribosomal protein uS9 family.</text>
</comment>
<name>RS9_CYAP4</name>
<accession>B8HNG6</accession>
<organism>
    <name type="scientific">Cyanothece sp. (strain PCC 7425 / ATCC 29141)</name>
    <dbReference type="NCBI Taxonomy" id="395961"/>
    <lineage>
        <taxon>Bacteria</taxon>
        <taxon>Bacillati</taxon>
        <taxon>Cyanobacteriota</taxon>
        <taxon>Cyanophyceae</taxon>
        <taxon>Gomontiellales</taxon>
        <taxon>Cyanothecaceae</taxon>
        <taxon>Cyanothece</taxon>
    </lineage>
</organism>
<feature type="chain" id="PRO_1000146447" description="Small ribosomal subunit protein uS9">
    <location>
        <begin position="1"/>
        <end position="137"/>
    </location>
</feature>
<feature type="region of interest" description="Disordered" evidence="2">
    <location>
        <begin position="105"/>
        <end position="137"/>
    </location>
</feature>
<feature type="compositionally biased region" description="Basic and acidic residues" evidence="2">
    <location>
        <begin position="105"/>
        <end position="117"/>
    </location>
</feature>
<feature type="compositionally biased region" description="Basic residues" evidence="2">
    <location>
        <begin position="118"/>
        <end position="137"/>
    </location>
</feature>
<reference key="1">
    <citation type="journal article" date="2011" name="MBio">
        <title>Novel metabolic attributes of the genus Cyanothece, comprising a group of unicellular nitrogen-fixing Cyanobacteria.</title>
        <authorList>
            <person name="Bandyopadhyay A."/>
            <person name="Elvitigala T."/>
            <person name="Welsh E."/>
            <person name="Stockel J."/>
            <person name="Liberton M."/>
            <person name="Min H."/>
            <person name="Sherman L.A."/>
            <person name="Pakrasi H.B."/>
        </authorList>
    </citation>
    <scope>NUCLEOTIDE SEQUENCE [LARGE SCALE GENOMIC DNA]</scope>
    <source>
        <strain>PCC 7425 / ATCC 29141</strain>
    </source>
</reference>
<evidence type="ECO:0000255" key="1">
    <source>
        <dbReference type="HAMAP-Rule" id="MF_00532"/>
    </source>
</evidence>
<evidence type="ECO:0000256" key="2">
    <source>
        <dbReference type="SAM" id="MobiDB-lite"/>
    </source>
</evidence>
<evidence type="ECO:0000305" key="3"/>
<keyword id="KW-0687">Ribonucleoprotein</keyword>
<keyword id="KW-0689">Ribosomal protein</keyword>
<proteinExistence type="inferred from homology"/>
<dbReference type="EMBL" id="CP001344">
    <property type="protein sequence ID" value="ACL43697.1"/>
    <property type="molecule type" value="Genomic_DNA"/>
</dbReference>
<dbReference type="SMR" id="B8HNG6"/>
<dbReference type="STRING" id="395961.Cyan7425_1320"/>
<dbReference type="KEGG" id="cyn:Cyan7425_1320"/>
<dbReference type="eggNOG" id="COG0103">
    <property type="taxonomic scope" value="Bacteria"/>
</dbReference>
<dbReference type="HOGENOM" id="CLU_046483_2_1_3"/>
<dbReference type="OrthoDB" id="9803965at2"/>
<dbReference type="GO" id="GO:0022627">
    <property type="term" value="C:cytosolic small ribosomal subunit"/>
    <property type="evidence" value="ECO:0007669"/>
    <property type="project" value="TreeGrafter"/>
</dbReference>
<dbReference type="GO" id="GO:0003723">
    <property type="term" value="F:RNA binding"/>
    <property type="evidence" value="ECO:0007669"/>
    <property type="project" value="TreeGrafter"/>
</dbReference>
<dbReference type="GO" id="GO:0003735">
    <property type="term" value="F:structural constituent of ribosome"/>
    <property type="evidence" value="ECO:0007669"/>
    <property type="project" value="InterPro"/>
</dbReference>
<dbReference type="GO" id="GO:0006412">
    <property type="term" value="P:translation"/>
    <property type="evidence" value="ECO:0007669"/>
    <property type="project" value="UniProtKB-UniRule"/>
</dbReference>
<dbReference type="FunFam" id="3.30.230.10:FF:000001">
    <property type="entry name" value="30S ribosomal protein S9"/>
    <property type="match status" value="1"/>
</dbReference>
<dbReference type="Gene3D" id="3.30.230.10">
    <property type="match status" value="1"/>
</dbReference>
<dbReference type="HAMAP" id="MF_00532_B">
    <property type="entry name" value="Ribosomal_uS9_B"/>
    <property type="match status" value="1"/>
</dbReference>
<dbReference type="InterPro" id="IPR020568">
    <property type="entry name" value="Ribosomal_Su5_D2-typ_SF"/>
</dbReference>
<dbReference type="InterPro" id="IPR000754">
    <property type="entry name" value="Ribosomal_uS9"/>
</dbReference>
<dbReference type="InterPro" id="IPR023035">
    <property type="entry name" value="Ribosomal_uS9_bac/plastid"/>
</dbReference>
<dbReference type="InterPro" id="IPR020574">
    <property type="entry name" value="Ribosomal_uS9_CS"/>
</dbReference>
<dbReference type="InterPro" id="IPR014721">
    <property type="entry name" value="Ribsml_uS5_D2-typ_fold_subgr"/>
</dbReference>
<dbReference type="NCBIfam" id="NF001099">
    <property type="entry name" value="PRK00132.1"/>
    <property type="match status" value="1"/>
</dbReference>
<dbReference type="PANTHER" id="PTHR21569">
    <property type="entry name" value="RIBOSOMAL PROTEIN S9"/>
    <property type="match status" value="1"/>
</dbReference>
<dbReference type="PANTHER" id="PTHR21569:SF1">
    <property type="entry name" value="SMALL RIBOSOMAL SUBUNIT PROTEIN US9M"/>
    <property type="match status" value="1"/>
</dbReference>
<dbReference type="Pfam" id="PF00380">
    <property type="entry name" value="Ribosomal_S9"/>
    <property type="match status" value="1"/>
</dbReference>
<dbReference type="SUPFAM" id="SSF54211">
    <property type="entry name" value="Ribosomal protein S5 domain 2-like"/>
    <property type="match status" value="1"/>
</dbReference>
<dbReference type="PROSITE" id="PS00360">
    <property type="entry name" value="RIBOSOMAL_S9"/>
    <property type="match status" value="1"/>
</dbReference>
<sequence length="137" mass="15162">MQLVEQSKRATYIGTGRRKSSVARVRLVPGTGQLTINGKSGELYLQFNPTYLAIAKAPLESLGLENDYDILVNTSGGGLTGQADSIRLGVARALCQLDPENRKPLKVEGYLTRDPRAKERKKYGLRKARKAPQYSKR</sequence>
<gene>
    <name evidence="1" type="primary">rpsI</name>
    <name evidence="1" type="synonym">rps9</name>
    <name type="ordered locus">Cyan7425_1320</name>
</gene>
<protein>
    <recommendedName>
        <fullName evidence="1">Small ribosomal subunit protein uS9</fullName>
    </recommendedName>
    <alternativeName>
        <fullName evidence="3">30S ribosomal protein S9</fullName>
    </alternativeName>
</protein>